<organism>
    <name type="scientific">Mus musculus</name>
    <name type="common">Mouse</name>
    <dbReference type="NCBI Taxonomy" id="10090"/>
    <lineage>
        <taxon>Eukaryota</taxon>
        <taxon>Metazoa</taxon>
        <taxon>Chordata</taxon>
        <taxon>Craniata</taxon>
        <taxon>Vertebrata</taxon>
        <taxon>Euteleostomi</taxon>
        <taxon>Mammalia</taxon>
        <taxon>Eutheria</taxon>
        <taxon>Euarchontoglires</taxon>
        <taxon>Glires</taxon>
        <taxon>Rodentia</taxon>
        <taxon>Myomorpha</taxon>
        <taxon>Muroidea</taxon>
        <taxon>Muridae</taxon>
        <taxon>Murinae</taxon>
        <taxon>Mus</taxon>
        <taxon>Mus</taxon>
    </lineage>
</organism>
<reference key="1">
    <citation type="journal article" date="1983" name="Biochemistry">
        <title>Amino acid sequence of the heavy chain variable region from the A/J mouse anti-arsonate monoclonal antibody 36-60 bearing a minor idiotype.</title>
        <authorList>
            <person name="Juszczak E.C."/>
            <person name="Margolies M.N."/>
        </authorList>
    </citation>
    <scope>PROTEIN SEQUENCE</scope>
    <source>
        <strain>A/J</strain>
    </source>
</reference>
<name>HVM47_MOUSE</name>
<keyword id="KW-0002">3D-structure</keyword>
<keyword id="KW-1064">Adaptive immunity</keyword>
<keyword id="KW-0903">Direct protein sequencing</keyword>
<keyword id="KW-0391">Immunity</keyword>
<keyword id="KW-1280">Immunoglobulin</keyword>
<keyword id="KW-1185">Reference proteome</keyword>
<protein>
    <recommendedName>
        <fullName>Ig heavy chain V region 36-60</fullName>
    </recommendedName>
</protein>
<comment type="miscellaneous">
    <text>This chain was isolated from an antiarsonate monoclonal antibody of the IgG2a subclass. It represents a second idiotype family characteristic of the antiarsonate response of strain A/J mice.</text>
</comment>
<evidence type="ECO:0007829" key="1">
    <source>
        <dbReference type="PDB" id="1J1O"/>
    </source>
</evidence>
<accession>P01823</accession>
<feature type="chain" id="PRO_0000059896" description="Ig heavy chain V region 36-60">
    <location>
        <begin position="1"/>
        <end position="113" status="greater than"/>
    </location>
</feature>
<feature type="non-terminal residue">
    <location>
        <position position="113"/>
    </location>
</feature>
<feature type="strand" evidence="1">
    <location>
        <begin position="3"/>
        <end position="8"/>
    </location>
</feature>
<feature type="strand" evidence="1">
    <location>
        <begin position="10"/>
        <end position="12"/>
    </location>
</feature>
<feature type="strand" evidence="1">
    <location>
        <begin position="18"/>
        <end position="27"/>
    </location>
</feature>
<feature type="helix" evidence="1">
    <location>
        <begin position="29"/>
        <end position="31"/>
    </location>
</feature>
<feature type="strand" evidence="1">
    <location>
        <begin position="34"/>
        <end position="40"/>
    </location>
</feature>
<feature type="turn" evidence="1">
    <location>
        <begin position="41"/>
        <end position="43"/>
    </location>
</feature>
<feature type="strand" evidence="1">
    <location>
        <begin position="44"/>
        <end position="51"/>
    </location>
</feature>
<feature type="strand" evidence="1">
    <location>
        <begin position="57"/>
        <end position="59"/>
    </location>
</feature>
<feature type="helix" evidence="1">
    <location>
        <begin position="61"/>
        <end position="63"/>
    </location>
</feature>
<feature type="strand" evidence="1">
    <location>
        <begin position="67"/>
        <end position="72"/>
    </location>
</feature>
<feature type="turn" evidence="1">
    <location>
        <begin position="73"/>
        <end position="76"/>
    </location>
</feature>
<feature type="strand" evidence="1">
    <location>
        <begin position="77"/>
        <end position="82"/>
    </location>
</feature>
<feature type="helix" evidence="1">
    <location>
        <begin position="87"/>
        <end position="89"/>
    </location>
</feature>
<feature type="strand" evidence="1">
    <location>
        <begin position="91"/>
        <end position="97"/>
    </location>
</feature>
<feature type="strand" evidence="1">
    <location>
        <begin position="107"/>
        <end position="111"/>
    </location>
</feature>
<proteinExistence type="evidence at protein level"/>
<dbReference type="PIR" id="A02098">
    <property type="entry name" value="G2MS60"/>
</dbReference>
<dbReference type="PDB" id="1C08">
    <property type="method" value="X-ray"/>
    <property type="resolution" value="2.30 A"/>
    <property type="chains" value="B=2-113"/>
</dbReference>
<dbReference type="PDB" id="1IC4">
    <property type="method" value="X-ray"/>
    <property type="resolution" value="2.50 A"/>
    <property type="chains" value="H=2-113"/>
</dbReference>
<dbReference type="PDB" id="1IC5">
    <property type="method" value="X-ray"/>
    <property type="resolution" value="2.30 A"/>
    <property type="chains" value="H=2-113"/>
</dbReference>
<dbReference type="PDB" id="1IC7">
    <property type="method" value="X-ray"/>
    <property type="resolution" value="2.10 A"/>
    <property type="chains" value="H=2-113"/>
</dbReference>
<dbReference type="PDB" id="1J1O">
    <property type="method" value="X-ray"/>
    <property type="resolution" value="1.80 A"/>
    <property type="chains" value="H=2-113"/>
</dbReference>
<dbReference type="PDB" id="1J1P">
    <property type="method" value="X-ray"/>
    <property type="resolution" value="1.80 A"/>
    <property type="chains" value="H=2-113"/>
</dbReference>
<dbReference type="PDB" id="1J1X">
    <property type="method" value="X-ray"/>
    <property type="resolution" value="1.80 A"/>
    <property type="chains" value="H=2-113"/>
</dbReference>
<dbReference type="PDB" id="2DQC">
    <property type="method" value="X-ray"/>
    <property type="resolution" value="1.80 A"/>
    <property type="chains" value="H=2-113"/>
</dbReference>
<dbReference type="PDB" id="2DQD">
    <property type="method" value="X-ray"/>
    <property type="resolution" value="1.80 A"/>
    <property type="chains" value="H=2-113"/>
</dbReference>
<dbReference type="PDB" id="2DQE">
    <property type="method" value="X-ray"/>
    <property type="resolution" value="1.90 A"/>
    <property type="chains" value="H=2-113"/>
</dbReference>
<dbReference type="PDB" id="2DQF">
    <property type="method" value="X-ray"/>
    <property type="resolution" value="2.50 A"/>
    <property type="chains" value="B/E=2-113"/>
</dbReference>
<dbReference type="PDB" id="2DQG">
    <property type="method" value="X-ray"/>
    <property type="resolution" value="2.30 A"/>
    <property type="chains" value="H=2-113"/>
</dbReference>
<dbReference type="PDB" id="2DQH">
    <property type="method" value="X-ray"/>
    <property type="resolution" value="2.30 A"/>
    <property type="chains" value="H=2-113"/>
</dbReference>
<dbReference type="PDB" id="2DQI">
    <property type="method" value="X-ray"/>
    <property type="resolution" value="2.00 A"/>
    <property type="chains" value="H=2-113"/>
</dbReference>
<dbReference type="PDB" id="2DQJ">
    <property type="method" value="X-ray"/>
    <property type="resolution" value="1.80 A"/>
    <property type="chains" value="H=2-113"/>
</dbReference>
<dbReference type="PDB" id="4CKD">
    <property type="method" value="EM"/>
    <property type="resolution" value="13.00 A"/>
    <property type="chains" value="H/I/J/K=2-113"/>
</dbReference>
<dbReference type="PDBsum" id="1C08"/>
<dbReference type="PDBsum" id="1IC4"/>
<dbReference type="PDBsum" id="1IC5"/>
<dbReference type="PDBsum" id="1IC7"/>
<dbReference type="PDBsum" id="1J1O"/>
<dbReference type="PDBsum" id="1J1P"/>
<dbReference type="PDBsum" id="1J1X"/>
<dbReference type="PDBsum" id="2DQC"/>
<dbReference type="PDBsum" id="2DQD"/>
<dbReference type="PDBsum" id="2DQE"/>
<dbReference type="PDBsum" id="2DQF"/>
<dbReference type="PDBsum" id="2DQG"/>
<dbReference type="PDBsum" id="2DQH"/>
<dbReference type="PDBsum" id="2DQI"/>
<dbReference type="PDBsum" id="2DQJ"/>
<dbReference type="PDBsum" id="4CKD"/>
<dbReference type="SMR" id="P01823"/>
<dbReference type="FunCoup" id="P01823">
    <property type="interactions" value="603"/>
</dbReference>
<dbReference type="iPTMnet" id="P01823"/>
<dbReference type="PhosphoSitePlus" id="P01823"/>
<dbReference type="InParanoid" id="P01823"/>
<dbReference type="EvolutionaryTrace" id="P01823"/>
<dbReference type="Proteomes" id="UP000000589">
    <property type="component" value="Unplaced"/>
</dbReference>
<dbReference type="RNAct" id="P01823">
    <property type="molecule type" value="protein"/>
</dbReference>
<dbReference type="GO" id="GO:0005576">
    <property type="term" value="C:extracellular region"/>
    <property type="evidence" value="ECO:0007669"/>
    <property type="project" value="UniProtKB-ARBA"/>
</dbReference>
<dbReference type="GO" id="GO:0019814">
    <property type="term" value="C:immunoglobulin complex"/>
    <property type="evidence" value="ECO:0007669"/>
    <property type="project" value="UniProtKB-KW"/>
</dbReference>
<dbReference type="GO" id="GO:0003823">
    <property type="term" value="F:antigen binding"/>
    <property type="evidence" value="ECO:0000318"/>
    <property type="project" value="GO_Central"/>
</dbReference>
<dbReference type="GO" id="GO:0016064">
    <property type="term" value="P:immunoglobulin mediated immune response"/>
    <property type="evidence" value="ECO:0000318"/>
    <property type="project" value="GO_Central"/>
</dbReference>
<dbReference type="FunFam" id="2.60.40.10:FF:002253">
    <property type="entry name" value="Ig heavy chain V region 36-60"/>
    <property type="match status" value="1"/>
</dbReference>
<dbReference type="Gene3D" id="2.60.40.10">
    <property type="entry name" value="Immunoglobulins"/>
    <property type="match status" value="1"/>
</dbReference>
<dbReference type="InterPro" id="IPR007110">
    <property type="entry name" value="Ig-like_dom"/>
</dbReference>
<dbReference type="InterPro" id="IPR036179">
    <property type="entry name" value="Ig-like_dom_sf"/>
</dbReference>
<dbReference type="InterPro" id="IPR013783">
    <property type="entry name" value="Ig-like_fold"/>
</dbReference>
<dbReference type="InterPro" id="IPR003599">
    <property type="entry name" value="Ig_sub"/>
</dbReference>
<dbReference type="InterPro" id="IPR013106">
    <property type="entry name" value="Ig_V-set"/>
</dbReference>
<dbReference type="InterPro" id="IPR050199">
    <property type="entry name" value="IgHV"/>
</dbReference>
<dbReference type="PANTHER" id="PTHR23266">
    <property type="entry name" value="IMMUNOGLOBULIN HEAVY CHAIN"/>
    <property type="match status" value="1"/>
</dbReference>
<dbReference type="Pfam" id="PF07686">
    <property type="entry name" value="V-set"/>
    <property type="match status" value="1"/>
</dbReference>
<dbReference type="SMART" id="SM00409">
    <property type="entry name" value="IG"/>
    <property type="match status" value="1"/>
</dbReference>
<dbReference type="SMART" id="SM00406">
    <property type="entry name" value="IGv"/>
    <property type="match status" value="1"/>
</dbReference>
<dbReference type="SUPFAM" id="SSF48726">
    <property type="entry name" value="Immunoglobulin"/>
    <property type="match status" value="1"/>
</dbReference>
<dbReference type="PROSITE" id="PS50835">
    <property type="entry name" value="IG_LIKE"/>
    <property type="match status" value="1"/>
</dbReference>
<sequence>EVQLQESGPSLVKPSQTLSLTCSVTGDSITSDYWNWIRKFPGNKLEHMGYISYSGSTYYNPSLKSRISITRDTSKNQYYLQLNSVTSEDTATYYCTSLRFAYWGQGTLVTVSA</sequence>